<name>CDR_STAES</name>
<sequence>MNKIIIVGAVAGGATCASQIRRLDKESEIIVFEKDRDMSFANCALPYYIGNVIEDRRKVLAYTPNQFYDKKQITVKTYHEVIQINDERQTVTVLNHQTNQTFEESYDTLILSPGASANRLNTHSDISFTVRNLEDTETIDTFITNTKAQRALVVGAGYISLEVLENLHHRGLDVTWIHRSTNINKLMDQDMNQPIIDEIEKRNITYRFNEEISHVNGHEVTFTSGKVENFDLIIEGVGTHPNSQFIKSSNVILNDKGYIPVNHNFQTNIPNIYALGDVITSHYRHVNLPAQVPLAWGAHRGASIIAEQLSGNSSIHFKGYLGNNIVKFFDYTLASVGIKPNELKNFDYDMVEVKQGAHAGYYPGNSPLHLRVYFEKDSRKLIRAAAVGKQGADKRIDVLSMAMMNNATVDDLTEFEVAYAPPYSHPKDLINLIGYKAQ</sequence>
<proteinExistence type="inferred from homology"/>
<protein>
    <recommendedName>
        <fullName evidence="1">Coenzyme A disulfide reductase</fullName>
        <shortName evidence="1">CoA-disulfide reductase</shortName>
        <shortName evidence="1">CoADR</shortName>
        <ecNumber evidence="1">1.8.1.14</ecNumber>
    </recommendedName>
</protein>
<gene>
    <name evidence="1" type="primary">cdr</name>
    <name type="ordered locus">SE_0669</name>
</gene>
<dbReference type="EC" id="1.8.1.14" evidence="1"/>
<dbReference type="EMBL" id="AE015929">
    <property type="protein sequence ID" value="AAO04266.1"/>
    <property type="molecule type" value="Genomic_DNA"/>
</dbReference>
<dbReference type="RefSeq" id="NP_764224.1">
    <property type="nucleotide sequence ID" value="NC_004461.1"/>
</dbReference>
<dbReference type="RefSeq" id="WP_001829263.1">
    <property type="nucleotide sequence ID" value="NZ_WBME01000074.1"/>
</dbReference>
<dbReference type="SMR" id="Q8CPT6"/>
<dbReference type="KEGG" id="sep:SE_0669"/>
<dbReference type="PATRIC" id="fig|176280.10.peg.644"/>
<dbReference type="eggNOG" id="COG0446">
    <property type="taxonomic scope" value="Bacteria"/>
</dbReference>
<dbReference type="HOGENOM" id="CLU_003291_1_3_9"/>
<dbReference type="OrthoDB" id="9802028at2"/>
<dbReference type="Proteomes" id="UP000001411">
    <property type="component" value="Chromosome"/>
</dbReference>
<dbReference type="GO" id="GO:0050451">
    <property type="term" value="F:CoA-disulfide reductase (NADPH) activity"/>
    <property type="evidence" value="ECO:0007669"/>
    <property type="project" value="UniProtKB-UniRule"/>
</dbReference>
<dbReference type="GO" id="GO:0050660">
    <property type="term" value="F:flavin adenine dinucleotide binding"/>
    <property type="evidence" value="ECO:0007669"/>
    <property type="project" value="UniProtKB-UniRule"/>
</dbReference>
<dbReference type="GO" id="GO:0050661">
    <property type="term" value="F:NADP binding"/>
    <property type="evidence" value="ECO:0007669"/>
    <property type="project" value="UniProtKB-UniRule"/>
</dbReference>
<dbReference type="GO" id="GO:0003756">
    <property type="term" value="F:protein disulfide isomerase activity"/>
    <property type="evidence" value="ECO:0007669"/>
    <property type="project" value="UniProtKB-UniRule"/>
</dbReference>
<dbReference type="Gene3D" id="3.30.390.30">
    <property type="match status" value="1"/>
</dbReference>
<dbReference type="Gene3D" id="3.50.50.60">
    <property type="entry name" value="FAD/NAD(P)-binding domain"/>
    <property type="match status" value="2"/>
</dbReference>
<dbReference type="HAMAP" id="MF_01608">
    <property type="entry name" value="CoA_diS_reduct"/>
    <property type="match status" value="1"/>
</dbReference>
<dbReference type="InterPro" id="IPR017758">
    <property type="entry name" value="CoA_disulphide_reductase"/>
</dbReference>
<dbReference type="InterPro" id="IPR023536">
    <property type="entry name" value="CoA_disulphide_reductase_staph"/>
</dbReference>
<dbReference type="InterPro" id="IPR050260">
    <property type="entry name" value="FAD-bd_OxRdtase"/>
</dbReference>
<dbReference type="InterPro" id="IPR036188">
    <property type="entry name" value="FAD/NAD-bd_sf"/>
</dbReference>
<dbReference type="InterPro" id="IPR023753">
    <property type="entry name" value="FAD/NAD-binding_dom"/>
</dbReference>
<dbReference type="InterPro" id="IPR016156">
    <property type="entry name" value="FAD/NAD-linked_Rdtase_dimer_sf"/>
</dbReference>
<dbReference type="InterPro" id="IPR004099">
    <property type="entry name" value="Pyr_nucl-diS_OxRdtase_dimer"/>
</dbReference>
<dbReference type="NCBIfam" id="TIGR03385">
    <property type="entry name" value="CoA_CoA_reduc"/>
    <property type="match status" value="1"/>
</dbReference>
<dbReference type="NCBIfam" id="NF010037">
    <property type="entry name" value="PRK13512.1"/>
    <property type="match status" value="1"/>
</dbReference>
<dbReference type="PANTHER" id="PTHR43429:SF1">
    <property type="entry name" value="NAD(P)H SULFUR OXIDOREDUCTASE (COA-DEPENDENT)"/>
    <property type="match status" value="1"/>
</dbReference>
<dbReference type="PANTHER" id="PTHR43429">
    <property type="entry name" value="PYRIDINE NUCLEOTIDE-DISULFIDE OXIDOREDUCTASE DOMAIN-CONTAINING"/>
    <property type="match status" value="1"/>
</dbReference>
<dbReference type="Pfam" id="PF07992">
    <property type="entry name" value="Pyr_redox_2"/>
    <property type="match status" value="1"/>
</dbReference>
<dbReference type="Pfam" id="PF02852">
    <property type="entry name" value="Pyr_redox_dim"/>
    <property type="match status" value="1"/>
</dbReference>
<dbReference type="PRINTS" id="PR00368">
    <property type="entry name" value="FADPNR"/>
</dbReference>
<dbReference type="PRINTS" id="PR00411">
    <property type="entry name" value="PNDRDTASEI"/>
</dbReference>
<dbReference type="SUPFAM" id="SSF51905">
    <property type="entry name" value="FAD/NAD(P)-binding domain"/>
    <property type="match status" value="1"/>
</dbReference>
<dbReference type="SUPFAM" id="SSF55424">
    <property type="entry name" value="FAD/NAD-linked reductases, dimerisation (C-terminal) domain"/>
    <property type="match status" value="1"/>
</dbReference>
<organism>
    <name type="scientific">Staphylococcus epidermidis (strain ATCC 12228 / FDA PCI 1200)</name>
    <dbReference type="NCBI Taxonomy" id="176280"/>
    <lineage>
        <taxon>Bacteria</taxon>
        <taxon>Bacillati</taxon>
        <taxon>Bacillota</taxon>
        <taxon>Bacilli</taxon>
        <taxon>Bacillales</taxon>
        <taxon>Staphylococcaceae</taxon>
        <taxon>Staphylococcus</taxon>
    </lineage>
</organism>
<reference key="1">
    <citation type="journal article" date="2003" name="Mol. Microbiol.">
        <title>Genome-based analysis of virulence genes in a non-biofilm-forming Staphylococcus epidermidis strain (ATCC 12228).</title>
        <authorList>
            <person name="Zhang Y.-Q."/>
            <person name="Ren S.-X."/>
            <person name="Li H.-L."/>
            <person name="Wang Y.-X."/>
            <person name="Fu G."/>
            <person name="Yang J."/>
            <person name="Qin Z.-Q."/>
            <person name="Miao Y.-G."/>
            <person name="Wang W.-Y."/>
            <person name="Chen R.-S."/>
            <person name="Shen Y."/>
            <person name="Chen Z."/>
            <person name="Yuan Z.-H."/>
            <person name="Zhao G.-P."/>
            <person name="Qu D."/>
            <person name="Danchin A."/>
            <person name="Wen Y.-M."/>
        </authorList>
    </citation>
    <scope>NUCLEOTIDE SEQUENCE [LARGE SCALE GENOMIC DNA]</scope>
    <source>
        <strain>ATCC 12228 / FDA PCI 1200</strain>
    </source>
</reference>
<feature type="chain" id="PRO_0000184695" description="Coenzyme A disulfide reductase">
    <location>
        <begin position="1"/>
        <end position="438"/>
    </location>
</feature>
<feature type="active site" description="Nucleophile" evidence="1">
    <location>
        <position position="43"/>
    </location>
</feature>
<feature type="active site" description="Redox-active" evidence="1">
    <location>
        <position position="43"/>
    </location>
</feature>
<feature type="binding site" evidence="1">
    <location>
        <begin position="8"/>
        <end position="33"/>
    </location>
    <ligand>
        <name>FAD</name>
        <dbReference type="ChEBI" id="CHEBI:57692"/>
    </ligand>
</feature>
<feature type="binding site" evidence="1">
    <location>
        <position position="15"/>
    </location>
    <ligand>
        <name>substrate</name>
    </ligand>
</feature>
<feature type="binding site" evidence="1">
    <location>
        <position position="19"/>
    </location>
    <ligand>
        <name>substrate</name>
    </ligand>
</feature>
<feature type="binding site" evidence="1">
    <location>
        <position position="22"/>
    </location>
    <ligand>
        <name>substrate</name>
    </ligand>
</feature>
<feature type="binding site" evidence="1">
    <location>
        <position position="39"/>
    </location>
    <ligand>
        <name>substrate</name>
    </ligand>
</feature>
<feature type="binding site" evidence="1">
    <location>
        <position position="42"/>
    </location>
    <ligand>
        <name>substrate</name>
    </ligand>
</feature>
<feature type="binding site" evidence="1">
    <location>
        <position position="71"/>
    </location>
    <ligand>
        <name>substrate</name>
    </ligand>
</feature>
<feature type="binding site" evidence="1">
    <location>
        <begin position="151"/>
        <end position="166"/>
    </location>
    <ligand>
        <name>NADP(+)</name>
        <dbReference type="ChEBI" id="CHEBI:58349"/>
    </ligand>
</feature>
<feature type="binding site" evidence="1">
    <location>
        <begin position="267"/>
        <end position="277"/>
    </location>
    <ligand>
        <name>FAD</name>
        <dbReference type="ChEBI" id="CHEBI:57692"/>
    </ligand>
</feature>
<feature type="binding site" evidence="1">
    <location>
        <position position="299"/>
    </location>
    <ligand>
        <name>substrate</name>
    </ligand>
</feature>
<feature type="binding site" evidence="1">
    <location>
        <position position="419"/>
    </location>
    <ligand>
        <name>FAD</name>
        <dbReference type="ChEBI" id="CHEBI:57692"/>
    </ligand>
</feature>
<feature type="binding site" evidence="1">
    <location>
        <position position="427"/>
    </location>
    <ligand>
        <name>substrate</name>
    </ligand>
</feature>
<accession>Q8CPT6</accession>
<keyword id="KW-0274">FAD</keyword>
<keyword id="KW-0285">Flavoprotein</keyword>
<keyword id="KW-0521">NADP</keyword>
<keyword id="KW-0560">Oxidoreductase</keyword>
<keyword id="KW-0676">Redox-active center</keyword>
<comment type="function">
    <text evidence="1">Catalyzes specifically the NADPH-dependent reduction of coenzyme A disulfide.</text>
</comment>
<comment type="catalytic activity">
    <reaction evidence="1">
        <text>NADP(+) + 2 CoA = CoA-disulfide + NADPH + H(+)</text>
        <dbReference type="Rhea" id="RHEA:14705"/>
        <dbReference type="ChEBI" id="CHEBI:15378"/>
        <dbReference type="ChEBI" id="CHEBI:57287"/>
        <dbReference type="ChEBI" id="CHEBI:57783"/>
        <dbReference type="ChEBI" id="CHEBI:58349"/>
        <dbReference type="ChEBI" id="CHEBI:62209"/>
        <dbReference type="EC" id="1.8.1.14"/>
    </reaction>
</comment>
<comment type="cofactor">
    <cofactor evidence="1">
        <name>FAD</name>
        <dbReference type="ChEBI" id="CHEBI:57692"/>
    </cofactor>
    <text evidence="1">Binds 1 FAD per subunit.</text>
</comment>
<comment type="subunit">
    <text evidence="1">Homodimer.</text>
</comment>
<comment type="domain">
    <text evidence="1">Contains 2 FAD binding domains and a single NADPH binding domain.</text>
</comment>
<comment type="miscellaneous">
    <text evidence="1">Reduction of disulfides occurs by a thiol-disulfide exchange reaction, but involves only a single catalytic cysteine residue that forms a stable mixed disulfide with CoA during catalysis.</text>
</comment>
<comment type="similarity">
    <text evidence="1">Belongs to the class-III pyridine nucleotide-disulfide oxidoreductase family.</text>
</comment>
<evidence type="ECO:0000255" key="1">
    <source>
        <dbReference type="HAMAP-Rule" id="MF_01608"/>
    </source>
</evidence>